<reference key="1">
    <citation type="journal article" date="1990" name="J. Mol. Biol.">
        <title>Characterization of a G-protein alpha-subunit gene from the nematode Caenorhabditis elegans.</title>
        <authorList>
            <person name="Silva F.I."/>
            <person name="Plasterk R.H.A."/>
        </authorList>
    </citation>
    <scope>NUCLEOTIDE SEQUENCE [GENOMIC DNA]</scope>
    <source>
        <strain>Bristol N2</strain>
    </source>
</reference>
<reference key="2">
    <citation type="submission" date="2000-09" db="EMBL/GenBank/DDBJ databases">
        <title>Interaction analysis of the complete G-alpha subfamily of heterotrimeric G proteins from Caenorhabditis elegans.</title>
        <authorList>
            <person name="Cuppen E."/>
            <person name="Jansen G."/>
            <person name="Plasterk R.H.A."/>
        </authorList>
    </citation>
    <scope>NUCLEOTIDE SEQUENCE [MRNA]</scope>
    <source>
        <strain>Bristol N2</strain>
    </source>
</reference>
<reference key="3">
    <citation type="journal article" date="1998" name="Science">
        <title>Genome sequence of the nematode C. elegans: a platform for investigating biology.</title>
        <authorList>
            <consortium name="The C. elegans sequencing consortium"/>
        </authorList>
    </citation>
    <scope>NUCLEOTIDE SEQUENCE [LARGE SCALE GENOMIC DNA]</scope>
    <source>
        <strain>Bristol N2</strain>
    </source>
</reference>
<reference key="4">
    <citation type="journal article" date="1999" name="Nat. Genet.">
        <title>The complete family of genes encoding G proteins of Caenorhabditis elegans.</title>
        <authorList>
            <person name="Jansen G."/>
            <person name="Thijssen K.L."/>
            <person name="Werner P."/>
            <person name="van der Horst M."/>
            <person name="Hazendonk E."/>
            <person name="Plasterk R.H.A."/>
        </authorList>
    </citation>
    <scope>GENE FAMILY</scope>
    <scope>NOMENCLATURE</scope>
</reference>
<reference key="5">
    <citation type="journal article" date="2014" name="Cell">
        <title>Chemosensation of bacterial secondary metabolites modulates neuroendocrine signaling and behavior of C. elegans.</title>
        <authorList>
            <person name="Meisel J.D."/>
            <person name="Panda O."/>
            <person name="Mahanti P."/>
            <person name="Schroeder F.C."/>
            <person name="Kim D.H."/>
        </authorList>
    </citation>
    <scope>FUNCTION</scope>
</reference>
<evidence type="ECO:0000250" key="1">
    <source>
        <dbReference type="UniProtKB" id="P10823"/>
    </source>
</evidence>
<evidence type="ECO:0000250" key="2">
    <source>
        <dbReference type="UniProtKB" id="P18064"/>
    </source>
</evidence>
<evidence type="ECO:0000255" key="3"/>
<evidence type="ECO:0000255" key="4">
    <source>
        <dbReference type="PROSITE-ProRule" id="PRU01230"/>
    </source>
</evidence>
<evidence type="ECO:0000269" key="5">
    <source>
    </source>
</evidence>
<evidence type="ECO:0000305" key="6"/>
<sequence length="356" mass="41490">MGLCQSEEEKVGTLKSRAIDKEIKQLQTSEERTVKLLLLGAGECGKSTVLKQMRLLTSKQYTDEELLTQAKLVYTNIVIEMDHLVKAMPAAGLNFSDPMREHDVHMLTLYIKDMQHKNFQQDAADHVEKLWKDPVVKRLYAERKELNIRDIGDNTEYFFENLPRISKEDYHPNATDTLLLRTKTTGIVEVGFEIKKVKFRVFDVGGQRSERKKWIHCFEDVNAIIFIAALSEYNEVLFEDETTNRMIESMRLFESICNSRWFHNTNIILFLNKKDLFEEKIKKENIHKAFPEYRGEQNYAETVAFIKTKFEALSNNPKKTFYVHETCATDTNQVQKILDSVISMIIQSNLHKSGLY</sequence>
<protein>
    <recommendedName>
        <fullName>Guanine nucleotide-binding protein alpha-2 subunit</fullName>
    </recommendedName>
</protein>
<comment type="function">
    <text evidence="5">Guanine nucleotide-binding proteins (G proteins) are involved as modulators or transducers in various transmembrane signaling systems. Involved in behavioral responses to P.aeruginosa by controlling the expression of daf-7, a member of the TGF-beta family, in ASJ sensory neurons (PubMed:25303524).</text>
</comment>
<comment type="cofactor">
    <cofactor evidence="2">
        <name>Mg(2+)</name>
        <dbReference type="ChEBI" id="CHEBI:18420"/>
    </cofactor>
</comment>
<comment type="subunit">
    <text>G proteins are composed of 3 units; alpha, beta and gamma. The alpha chain contains the guanine nucleotide binding site.</text>
</comment>
<comment type="similarity">
    <text evidence="6">Belongs to the G-alpha family. G(q) subfamily.</text>
</comment>
<organism>
    <name type="scientific">Caenorhabditis elegans</name>
    <dbReference type="NCBI Taxonomy" id="6239"/>
    <lineage>
        <taxon>Eukaryota</taxon>
        <taxon>Metazoa</taxon>
        <taxon>Ecdysozoa</taxon>
        <taxon>Nematoda</taxon>
        <taxon>Chromadorea</taxon>
        <taxon>Rhabditida</taxon>
        <taxon>Rhabditina</taxon>
        <taxon>Rhabditomorpha</taxon>
        <taxon>Rhabditoidea</taxon>
        <taxon>Rhabditidae</taxon>
        <taxon>Peloderinae</taxon>
        <taxon>Caenorhabditis</taxon>
    </lineage>
</organism>
<gene>
    <name type="primary">gpa-2</name>
    <name type="ORF">F38E1.5</name>
</gene>
<keyword id="KW-0342">GTP-binding</keyword>
<keyword id="KW-0378">Hydrolase</keyword>
<keyword id="KW-0449">Lipoprotein</keyword>
<keyword id="KW-0460">Magnesium</keyword>
<keyword id="KW-0479">Metal-binding</keyword>
<keyword id="KW-0519">Myristate</keyword>
<keyword id="KW-0547">Nucleotide-binding</keyword>
<keyword id="KW-0564">Palmitate</keyword>
<keyword id="KW-1185">Reference proteome</keyword>
<keyword id="KW-0807">Transducer</keyword>
<accession>P22454</accession>
<feature type="initiator methionine" description="Removed" evidence="3">
    <location>
        <position position="1"/>
    </location>
</feature>
<feature type="chain" id="PRO_0000203631" description="Guanine nucleotide-binding protein alpha-2 subunit">
    <location>
        <begin position="2"/>
        <end position="356"/>
    </location>
</feature>
<feature type="domain" description="G-alpha" evidence="4">
    <location>
        <begin position="32"/>
        <end position="356"/>
    </location>
</feature>
<feature type="region of interest" description="G1 motif" evidence="4">
    <location>
        <begin position="35"/>
        <end position="48"/>
    </location>
</feature>
<feature type="region of interest" description="G2 motif" evidence="4">
    <location>
        <begin position="176"/>
        <end position="184"/>
    </location>
</feature>
<feature type="region of interest" description="G3 motif" evidence="4">
    <location>
        <begin position="199"/>
        <end position="208"/>
    </location>
</feature>
<feature type="region of interest" description="G4 motif" evidence="4">
    <location>
        <begin position="268"/>
        <end position="275"/>
    </location>
</feature>
<feature type="region of interest" description="G5 motif" evidence="4">
    <location>
        <begin position="326"/>
        <end position="331"/>
    </location>
</feature>
<feature type="binding site" evidence="2">
    <location>
        <position position="43"/>
    </location>
    <ligand>
        <name>GTP</name>
        <dbReference type="ChEBI" id="CHEBI:37565"/>
    </ligand>
</feature>
<feature type="binding site" evidence="2">
    <location>
        <position position="45"/>
    </location>
    <ligand>
        <name>GTP</name>
        <dbReference type="ChEBI" id="CHEBI:37565"/>
    </ligand>
</feature>
<feature type="binding site" evidence="2">
    <location>
        <position position="46"/>
    </location>
    <ligand>
        <name>GTP</name>
        <dbReference type="ChEBI" id="CHEBI:37565"/>
    </ligand>
</feature>
<feature type="binding site" evidence="2">
    <location>
        <position position="47"/>
    </location>
    <ligand>
        <name>GTP</name>
        <dbReference type="ChEBI" id="CHEBI:37565"/>
    </ligand>
</feature>
<feature type="binding site" evidence="2">
    <location>
        <position position="47"/>
    </location>
    <ligand>
        <name>Mg(2+)</name>
        <dbReference type="ChEBI" id="CHEBI:18420"/>
    </ligand>
</feature>
<feature type="binding site" evidence="2">
    <location>
        <position position="48"/>
    </location>
    <ligand>
        <name>GTP</name>
        <dbReference type="ChEBI" id="CHEBI:37565"/>
    </ligand>
</feature>
<feature type="binding site" evidence="2">
    <location>
        <position position="153"/>
    </location>
    <ligand>
        <name>GTP</name>
        <dbReference type="ChEBI" id="CHEBI:37565"/>
    </ligand>
</feature>
<feature type="binding site" evidence="2">
    <location>
        <position position="178"/>
    </location>
    <ligand>
        <name>GTP</name>
        <dbReference type="ChEBI" id="CHEBI:37565"/>
    </ligand>
</feature>
<feature type="binding site" evidence="2">
    <location>
        <position position="184"/>
    </location>
    <ligand>
        <name>GTP</name>
        <dbReference type="ChEBI" id="CHEBI:37565"/>
    </ligand>
</feature>
<feature type="binding site" evidence="2">
    <location>
        <position position="184"/>
    </location>
    <ligand>
        <name>Mg(2+)</name>
        <dbReference type="ChEBI" id="CHEBI:18420"/>
    </ligand>
</feature>
<feature type="binding site" evidence="2">
    <location>
        <position position="206"/>
    </location>
    <ligand>
        <name>GTP</name>
        <dbReference type="ChEBI" id="CHEBI:37565"/>
    </ligand>
</feature>
<feature type="binding site" evidence="2">
    <location>
        <position position="272"/>
    </location>
    <ligand>
        <name>GTP</name>
        <dbReference type="ChEBI" id="CHEBI:37565"/>
    </ligand>
</feature>
<feature type="binding site" evidence="2">
    <location>
        <position position="273"/>
    </location>
    <ligand>
        <name>GTP</name>
        <dbReference type="ChEBI" id="CHEBI:37565"/>
    </ligand>
</feature>
<feature type="binding site" evidence="2">
    <location>
        <position position="275"/>
    </location>
    <ligand>
        <name>GTP</name>
        <dbReference type="ChEBI" id="CHEBI:37565"/>
    </ligand>
</feature>
<feature type="binding site" evidence="2">
    <location>
        <position position="328"/>
    </location>
    <ligand>
        <name>GTP</name>
        <dbReference type="ChEBI" id="CHEBI:37565"/>
    </ligand>
</feature>
<feature type="lipid moiety-binding region" description="N-myristoyl glycine" evidence="1">
    <location>
        <position position="2"/>
    </location>
</feature>
<feature type="lipid moiety-binding region" description="S-palmitoyl cysteine" evidence="1">
    <location>
        <position position="4"/>
    </location>
</feature>
<proteinExistence type="evidence at transcript level"/>
<dbReference type="EMBL" id="X53156">
    <property type="protein sequence ID" value="CAA37312.1"/>
    <property type="molecule type" value="Genomic_DNA"/>
</dbReference>
<dbReference type="EMBL" id="AY008125">
    <property type="protein sequence ID" value="AAG32078.1"/>
    <property type="molecule type" value="mRNA"/>
</dbReference>
<dbReference type="EMBL" id="FO080433">
    <property type="protein sequence ID" value="CCD63657.1"/>
    <property type="molecule type" value="Genomic_DNA"/>
</dbReference>
<dbReference type="PIR" id="S13221">
    <property type="entry name" value="S13221"/>
</dbReference>
<dbReference type="RefSeq" id="NP_505157.1">
    <property type="nucleotide sequence ID" value="NM_072756.5"/>
</dbReference>
<dbReference type="SMR" id="P22454"/>
<dbReference type="FunCoup" id="P22454">
    <property type="interactions" value="35"/>
</dbReference>
<dbReference type="STRING" id="6239.F38E1.5.1"/>
<dbReference type="PaxDb" id="6239-F38E1.5"/>
<dbReference type="PeptideAtlas" id="P22454"/>
<dbReference type="EnsemblMetazoa" id="F38E1.5.1">
    <property type="protein sequence ID" value="F38E1.5.1"/>
    <property type="gene ID" value="WBGene00001664"/>
</dbReference>
<dbReference type="GeneID" id="179219"/>
<dbReference type="KEGG" id="cel:CELE_F38E1.5"/>
<dbReference type="UCSC" id="F38E1.5">
    <property type="organism name" value="c. elegans"/>
</dbReference>
<dbReference type="AGR" id="WB:WBGene00001664"/>
<dbReference type="CTD" id="179219"/>
<dbReference type="WormBase" id="F38E1.5">
    <property type="protein sequence ID" value="CE04523"/>
    <property type="gene ID" value="WBGene00001664"/>
    <property type="gene designation" value="gpa-2"/>
</dbReference>
<dbReference type="eggNOG" id="KOG0082">
    <property type="taxonomic scope" value="Eukaryota"/>
</dbReference>
<dbReference type="GeneTree" id="ENSGT00970000196172"/>
<dbReference type="HOGENOM" id="CLU_014184_6_0_1"/>
<dbReference type="InParanoid" id="P22454"/>
<dbReference type="OMA" id="FHNTNII"/>
<dbReference type="OrthoDB" id="5817230at2759"/>
<dbReference type="PhylomeDB" id="P22454"/>
<dbReference type="PRO" id="PR:P22454"/>
<dbReference type="Proteomes" id="UP000001940">
    <property type="component" value="Chromosome V"/>
</dbReference>
<dbReference type="GO" id="GO:0030424">
    <property type="term" value="C:axon"/>
    <property type="evidence" value="ECO:0000314"/>
    <property type="project" value="WormBase"/>
</dbReference>
<dbReference type="GO" id="GO:0005737">
    <property type="term" value="C:cytoplasm"/>
    <property type="evidence" value="ECO:0000318"/>
    <property type="project" value="GO_Central"/>
</dbReference>
<dbReference type="GO" id="GO:0005834">
    <property type="term" value="C:heterotrimeric G-protein complex"/>
    <property type="evidence" value="ECO:0000318"/>
    <property type="project" value="GO_Central"/>
</dbReference>
<dbReference type="GO" id="GO:0043025">
    <property type="term" value="C:neuronal cell body"/>
    <property type="evidence" value="ECO:0000314"/>
    <property type="project" value="WormBase"/>
</dbReference>
<dbReference type="GO" id="GO:0097730">
    <property type="term" value="C:non-motile cilium"/>
    <property type="evidence" value="ECO:0000314"/>
    <property type="project" value="WormBase"/>
</dbReference>
<dbReference type="GO" id="GO:0001664">
    <property type="term" value="F:G protein-coupled receptor binding"/>
    <property type="evidence" value="ECO:0000318"/>
    <property type="project" value="GO_Central"/>
</dbReference>
<dbReference type="GO" id="GO:0031683">
    <property type="term" value="F:G-protein beta/gamma-subunit complex binding"/>
    <property type="evidence" value="ECO:0000318"/>
    <property type="project" value="GO_Central"/>
</dbReference>
<dbReference type="GO" id="GO:0005525">
    <property type="term" value="F:GTP binding"/>
    <property type="evidence" value="ECO:0007669"/>
    <property type="project" value="UniProtKB-KW"/>
</dbReference>
<dbReference type="GO" id="GO:0003924">
    <property type="term" value="F:GTPase activity"/>
    <property type="evidence" value="ECO:0000318"/>
    <property type="project" value="GO_Central"/>
</dbReference>
<dbReference type="GO" id="GO:0046872">
    <property type="term" value="F:metal ion binding"/>
    <property type="evidence" value="ECO:0007669"/>
    <property type="project" value="UniProtKB-KW"/>
</dbReference>
<dbReference type="GO" id="GO:0007188">
    <property type="term" value="P:adenylate cyclase-modulating G protein-coupled receptor signaling pathway"/>
    <property type="evidence" value="ECO:0000318"/>
    <property type="project" value="GO_Central"/>
</dbReference>
<dbReference type="GO" id="GO:0050829">
    <property type="term" value="P:defense response to Gram-negative bacterium"/>
    <property type="evidence" value="ECO:0000316"/>
    <property type="project" value="UniProtKB"/>
</dbReference>
<dbReference type="GO" id="GO:0007186">
    <property type="term" value="P:G protein-coupled receptor signaling pathway"/>
    <property type="evidence" value="ECO:0000315"/>
    <property type="project" value="WormBase"/>
</dbReference>
<dbReference type="GO" id="GO:0008355">
    <property type="term" value="P:olfactory learning"/>
    <property type="evidence" value="ECO:0000316"/>
    <property type="project" value="WormBase"/>
</dbReference>
<dbReference type="GO" id="GO:0010628">
    <property type="term" value="P:positive regulation of gene expression"/>
    <property type="evidence" value="ECO:0000315"/>
    <property type="project" value="UniProtKB"/>
</dbReference>
<dbReference type="CDD" id="cd00066">
    <property type="entry name" value="G-alpha"/>
    <property type="match status" value="1"/>
</dbReference>
<dbReference type="FunFam" id="1.10.400.10:FF:000011">
    <property type="entry name" value="Guanine nucleotide-binding protein alpha-1 subunit"/>
    <property type="match status" value="1"/>
</dbReference>
<dbReference type="FunFam" id="3.40.50.300:FF:000041">
    <property type="entry name" value="Guanine nucleotide-binding protein G(I) subunit alpha"/>
    <property type="match status" value="1"/>
</dbReference>
<dbReference type="Gene3D" id="1.10.400.10">
    <property type="entry name" value="GI Alpha 1, domain 2-like"/>
    <property type="match status" value="1"/>
</dbReference>
<dbReference type="Gene3D" id="3.40.50.300">
    <property type="entry name" value="P-loop containing nucleotide triphosphate hydrolases"/>
    <property type="match status" value="1"/>
</dbReference>
<dbReference type="InterPro" id="IPR001408">
    <property type="entry name" value="Gprotein_alpha_I"/>
</dbReference>
<dbReference type="InterPro" id="IPR001019">
    <property type="entry name" value="Gprotein_alpha_su"/>
</dbReference>
<dbReference type="InterPro" id="IPR011025">
    <property type="entry name" value="GproteinA_insert"/>
</dbReference>
<dbReference type="InterPro" id="IPR027417">
    <property type="entry name" value="P-loop_NTPase"/>
</dbReference>
<dbReference type="PANTHER" id="PTHR10218">
    <property type="entry name" value="GTP-BINDING PROTEIN ALPHA SUBUNIT"/>
    <property type="match status" value="1"/>
</dbReference>
<dbReference type="PANTHER" id="PTHR10218:SF245">
    <property type="entry name" value="GUANINE NUCLEOTIDE-BINDING PROTEIN ALPHA-2 SUBUNIT-RELATED"/>
    <property type="match status" value="1"/>
</dbReference>
<dbReference type="Pfam" id="PF00503">
    <property type="entry name" value="G-alpha"/>
    <property type="match status" value="1"/>
</dbReference>
<dbReference type="PRINTS" id="PR00318">
    <property type="entry name" value="GPROTEINA"/>
</dbReference>
<dbReference type="PRINTS" id="PR00441">
    <property type="entry name" value="GPROTEINAI"/>
</dbReference>
<dbReference type="SMART" id="SM00275">
    <property type="entry name" value="G_alpha"/>
    <property type="match status" value="1"/>
</dbReference>
<dbReference type="SUPFAM" id="SSF52540">
    <property type="entry name" value="P-loop containing nucleoside triphosphate hydrolases"/>
    <property type="match status" value="1"/>
</dbReference>
<dbReference type="SUPFAM" id="SSF47895">
    <property type="entry name" value="Transducin (alpha subunit), insertion domain"/>
    <property type="match status" value="1"/>
</dbReference>
<dbReference type="PROSITE" id="PS51882">
    <property type="entry name" value="G_ALPHA"/>
    <property type="match status" value="1"/>
</dbReference>
<name>GPA2_CAEEL</name>